<dbReference type="EMBL" id="AL590842">
    <property type="protein sequence ID" value="CAL18915.1"/>
    <property type="molecule type" value="Genomic_DNA"/>
</dbReference>
<dbReference type="EMBL" id="AE009952">
    <property type="protein sequence ID" value="AAM87557.1"/>
    <property type="molecule type" value="Genomic_DNA"/>
</dbReference>
<dbReference type="EMBL" id="AE017042">
    <property type="protein sequence ID" value="AAS60506.1"/>
    <property type="molecule type" value="Genomic_DNA"/>
</dbReference>
<dbReference type="PIR" id="AI0028">
    <property type="entry name" value="AI0028"/>
</dbReference>
<dbReference type="RefSeq" id="WP_002218948.1">
    <property type="nucleotide sequence ID" value="NZ_WUCM01000078.1"/>
</dbReference>
<dbReference type="RefSeq" id="YP_002345313.1">
    <property type="nucleotide sequence ID" value="NC_003143.1"/>
</dbReference>
<dbReference type="SMR" id="Q8ZJ89"/>
<dbReference type="STRING" id="214092.YPO0232"/>
<dbReference type="PaxDb" id="214092-YPO0232"/>
<dbReference type="DNASU" id="1148960"/>
<dbReference type="EnsemblBacteria" id="AAS60506">
    <property type="protein sequence ID" value="AAS60506"/>
    <property type="gene ID" value="YP_0230"/>
</dbReference>
<dbReference type="GeneID" id="96663173"/>
<dbReference type="KEGG" id="ype:YPO0232"/>
<dbReference type="KEGG" id="ypk:y4013"/>
<dbReference type="KEGG" id="ypm:YP_0230"/>
<dbReference type="PATRIC" id="fig|214092.21.peg.460"/>
<dbReference type="eggNOG" id="COG0100">
    <property type="taxonomic scope" value="Bacteria"/>
</dbReference>
<dbReference type="HOGENOM" id="CLU_072439_5_0_6"/>
<dbReference type="OMA" id="KWGVAHI"/>
<dbReference type="OrthoDB" id="9806415at2"/>
<dbReference type="Proteomes" id="UP000000815">
    <property type="component" value="Chromosome"/>
</dbReference>
<dbReference type="Proteomes" id="UP000001019">
    <property type="component" value="Chromosome"/>
</dbReference>
<dbReference type="Proteomes" id="UP000002490">
    <property type="component" value="Chromosome"/>
</dbReference>
<dbReference type="GO" id="GO:0022627">
    <property type="term" value="C:cytosolic small ribosomal subunit"/>
    <property type="evidence" value="ECO:0000318"/>
    <property type="project" value="GO_Central"/>
</dbReference>
<dbReference type="GO" id="GO:0019843">
    <property type="term" value="F:rRNA binding"/>
    <property type="evidence" value="ECO:0007669"/>
    <property type="project" value="UniProtKB-UniRule"/>
</dbReference>
<dbReference type="GO" id="GO:0003735">
    <property type="term" value="F:structural constituent of ribosome"/>
    <property type="evidence" value="ECO:0000318"/>
    <property type="project" value="GO_Central"/>
</dbReference>
<dbReference type="GO" id="GO:0006412">
    <property type="term" value="P:translation"/>
    <property type="evidence" value="ECO:0000318"/>
    <property type="project" value="GO_Central"/>
</dbReference>
<dbReference type="FunFam" id="3.30.420.80:FF:000001">
    <property type="entry name" value="30S ribosomal protein S11"/>
    <property type="match status" value="1"/>
</dbReference>
<dbReference type="Gene3D" id="3.30.420.80">
    <property type="entry name" value="Ribosomal protein S11"/>
    <property type="match status" value="1"/>
</dbReference>
<dbReference type="HAMAP" id="MF_01310">
    <property type="entry name" value="Ribosomal_uS11"/>
    <property type="match status" value="1"/>
</dbReference>
<dbReference type="InterPro" id="IPR001971">
    <property type="entry name" value="Ribosomal_uS11"/>
</dbReference>
<dbReference type="InterPro" id="IPR019981">
    <property type="entry name" value="Ribosomal_uS11_bac-type"/>
</dbReference>
<dbReference type="InterPro" id="IPR018102">
    <property type="entry name" value="Ribosomal_uS11_CS"/>
</dbReference>
<dbReference type="InterPro" id="IPR036967">
    <property type="entry name" value="Ribosomal_uS11_sf"/>
</dbReference>
<dbReference type="NCBIfam" id="NF003698">
    <property type="entry name" value="PRK05309.1"/>
    <property type="match status" value="1"/>
</dbReference>
<dbReference type="NCBIfam" id="TIGR03632">
    <property type="entry name" value="uS11_bact"/>
    <property type="match status" value="1"/>
</dbReference>
<dbReference type="PANTHER" id="PTHR11759">
    <property type="entry name" value="40S RIBOSOMAL PROTEIN S14/30S RIBOSOMAL PROTEIN S11"/>
    <property type="match status" value="1"/>
</dbReference>
<dbReference type="Pfam" id="PF00411">
    <property type="entry name" value="Ribosomal_S11"/>
    <property type="match status" value="1"/>
</dbReference>
<dbReference type="PIRSF" id="PIRSF002131">
    <property type="entry name" value="Ribosomal_S11"/>
    <property type="match status" value="1"/>
</dbReference>
<dbReference type="SUPFAM" id="SSF53137">
    <property type="entry name" value="Translational machinery components"/>
    <property type="match status" value="1"/>
</dbReference>
<dbReference type="PROSITE" id="PS00054">
    <property type="entry name" value="RIBOSOMAL_S11"/>
    <property type="match status" value="1"/>
</dbReference>
<accession>Q8ZJ89</accession>
<accession>Q0WK75</accession>
<protein>
    <recommendedName>
        <fullName evidence="1">Small ribosomal subunit protein uS11</fullName>
    </recommendedName>
    <alternativeName>
        <fullName evidence="2">30S ribosomal protein S11</fullName>
    </alternativeName>
</protein>
<gene>
    <name evidence="1" type="primary">rpsK</name>
    <name type="ordered locus">YPO0232</name>
    <name type="ordered locus">y4013</name>
    <name type="ordered locus">YP_0230</name>
</gene>
<evidence type="ECO:0000255" key="1">
    <source>
        <dbReference type="HAMAP-Rule" id="MF_01310"/>
    </source>
</evidence>
<evidence type="ECO:0000305" key="2"/>
<reference key="1">
    <citation type="journal article" date="2001" name="Nature">
        <title>Genome sequence of Yersinia pestis, the causative agent of plague.</title>
        <authorList>
            <person name="Parkhill J."/>
            <person name="Wren B.W."/>
            <person name="Thomson N.R."/>
            <person name="Titball R.W."/>
            <person name="Holden M.T.G."/>
            <person name="Prentice M.B."/>
            <person name="Sebaihia M."/>
            <person name="James K.D."/>
            <person name="Churcher C.M."/>
            <person name="Mungall K.L."/>
            <person name="Baker S."/>
            <person name="Basham D."/>
            <person name="Bentley S.D."/>
            <person name="Brooks K."/>
            <person name="Cerdeno-Tarraga A.-M."/>
            <person name="Chillingworth T."/>
            <person name="Cronin A."/>
            <person name="Davies R.M."/>
            <person name="Davis P."/>
            <person name="Dougan G."/>
            <person name="Feltwell T."/>
            <person name="Hamlin N."/>
            <person name="Holroyd S."/>
            <person name="Jagels K."/>
            <person name="Karlyshev A.V."/>
            <person name="Leather S."/>
            <person name="Moule S."/>
            <person name="Oyston P.C.F."/>
            <person name="Quail M.A."/>
            <person name="Rutherford K.M."/>
            <person name="Simmonds M."/>
            <person name="Skelton J."/>
            <person name="Stevens K."/>
            <person name="Whitehead S."/>
            <person name="Barrell B.G."/>
        </authorList>
    </citation>
    <scope>NUCLEOTIDE SEQUENCE [LARGE SCALE GENOMIC DNA]</scope>
    <source>
        <strain>CO-92 / Biovar Orientalis</strain>
    </source>
</reference>
<reference key="2">
    <citation type="journal article" date="2002" name="J. Bacteriol.">
        <title>Genome sequence of Yersinia pestis KIM.</title>
        <authorList>
            <person name="Deng W."/>
            <person name="Burland V."/>
            <person name="Plunkett G. III"/>
            <person name="Boutin A."/>
            <person name="Mayhew G.F."/>
            <person name="Liss P."/>
            <person name="Perna N.T."/>
            <person name="Rose D.J."/>
            <person name="Mau B."/>
            <person name="Zhou S."/>
            <person name="Schwartz D.C."/>
            <person name="Fetherston J.D."/>
            <person name="Lindler L.E."/>
            <person name="Brubaker R.R."/>
            <person name="Plano G.V."/>
            <person name="Straley S.C."/>
            <person name="McDonough K.A."/>
            <person name="Nilles M.L."/>
            <person name="Matson J.S."/>
            <person name="Blattner F.R."/>
            <person name="Perry R.D."/>
        </authorList>
    </citation>
    <scope>NUCLEOTIDE SEQUENCE [LARGE SCALE GENOMIC DNA]</scope>
    <source>
        <strain>KIM10+ / Biovar Mediaevalis</strain>
    </source>
</reference>
<reference key="3">
    <citation type="journal article" date="2004" name="DNA Res.">
        <title>Complete genome sequence of Yersinia pestis strain 91001, an isolate avirulent to humans.</title>
        <authorList>
            <person name="Song Y."/>
            <person name="Tong Z."/>
            <person name="Wang J."/>
            <person name="Wang L."/>
            <person name="Guo Z."/>
            <person name="Han Y."/>
            <person name="Zhang J."/>
            <person name="Pei D."/>
            <person name="Zhou D."/>
            <person name="Qin H."/>
            <person name="Pang X."/>
            <person name="Han Y."/>
            <person name="Zhai J."/>
            <person name="Li M."/>
            <person name="Cui B."/>
            <person name="Qi Z."/>
            <person name="Jin L."/>
            <person name="Dai R."/>
            <person name="Chen F."/>
            <person name="Li S."/>
            <person name="Ye C."/>
            <person name="Du Z."/>
            <person name="Lin W."/>
            <person name="Wang J."/>
            <person name="Yu J."/>
            <person name="Yang H."/>
            <person name="Wang J."/>
            <person name="Huang P."/>
            <person name="Yang R."/>
        </authorList>
    </citation>
    <scope>NUCLEOTIDE SEQUENCE [LARGE SCALE GENOMIC DNA]</scope>
    <source>
        <strain>91001 / Biovar Mediaevalis</strain>
    </source>
</reference>
<name>RS11_YERPE</name>
<sequence>MAKAPIRARKRVRKTVSDGVAHIHASFNNTIVTITDRQGNALGWATAGGSGFRGSRKSTPFAAQVAAERCAEAVKEYGIKNLEVMVKGPGPGRESTIRALNAAGFRITNITDVTPIPHNGCRPPKKRRV</sequence>
<comment type="function">
    <text evidence="1">Located on the platform of the 30S subunit, it bridges several disparate RNA helices of the 16S rRNA. Forms part of the Shine-Dalgarno cleft in the 70S ribosome.</text>
</comment>
<comment type="subunit">
    <text evidence="1">Part of the 30S ribosomal subunit. Interacts with proteins S7 and S18. Binds to IF-3.</text>
</comment>
<comment type="similarity">
    <text evidence="1">Belongs to the universal ribosomal protein uS11 family.</text>
</comment>
<proteinExistence type="inferred from homology"/>
<organism>
    <name type="scientific">Yersinia pestis</name>
    <dbReference type="NCBI Taxonomy" id="632"/>
    <lineage>
        <taxon>Bacteria</taxon>
        <taxon>Pseudomonadati</taxon>
        <taxon>Pseudomonadota</taxon>
        <taxon>Gammaproteobacteria</taxon>
        <taxon>Enterobacterales</taxon>
        <taxon>Yersiniaceae</taxon>
        <taxon>Yersinia</taxon>
    </lineage>
</organism>
<feature type="chain" id="PRO_0000123263" description="Small ribosomal subunit protein uS11">
    <location>
        <begin position="1"/>
        <end position="129"/>
    </location>
</feature>
<keyword id="KW-1185">Reference proteome</keyword>
<keyword id="KW-0687">Ribonucleoprotein</keyword>
<keyword id="KW-0689">Ribosomal protein</keyword>
<keyword id="KW-0694">RNA-binding</keyword>
<keyword id="KW-0699">rRNA-binding</keyword>